<sequence>MKCPYCAYGESKVVDSRSTEDGSSIRRRRECLKCNRRYTTYEKIETTPILVIKKNMSREYFDRNKIVNGLMKACQKRPVSRKQIEQIANEVERHISNEMLTEVNTDKIGQIIMKNLKKIDEVSYVRFASVYRQFKDINTFMEEIKNLMDKN</sequence>
<reference key="1">
    <citation type="journal article" date="2007" name="PLoS ONE">
        <title>Analysis of the neurotoxin complex genes in Clostridium botulinum A1-A4 and B1 strains: BoNT/A3, /Ba4 and /B1 clusters are located within plasmids.</title>
        <authorList>
            <person name="Smith T.J."/>
            <person name="Hill K.K."/>
            <person name="Foley B.T."/>
            <person name="Detter J.C."/>
            <person name="Munk A.C."/>
            <person name="Bruce D.C."/>
            <person name="Doggett N.A."/>
            <person name="Smith L.A."/>
            <person name="Marks J.D."/>
            <person name="Xie G."/>
            <person name="Brettin T.S."/>
        </authorList>
    </citation>
    <scope>NUCLEOTIDE SEQUENCE [LARGE SCALE GENOMIC DNA]</scope>
    <source>
        <strain>ATCC 19397 / Type A</strain>
    </source>
</reference>
<gene>
    <name evidence="1" type="primary">nrdR</name>
    <name type="ordered locus">CLB_2406</name>
</gene>
<accession>A7FW99</accession>
<evidence type="ECO:0000255" key="1">
    <source>
        <dbReference type="HAMAP-Rule" id="MF_00440"/>
    </source>
</evidence>
<keyword id="KW-0067">ATP-binding</keyword>
<keyword id="KW-0238">DNA-binding</keyword>
<keyword id="KW-0479">Metal-binding</keyword>
<keyword id="KW-0547">Nucleotide-binding</keyword>
<keyword id="KW-0678">Repressor</keyword>
<keyword id="KW-0804">Transcription</keyword>
<keyword id="KW-0805">Transcription regulation</keyword>
<keyword id="KW-0862">Zinc</keyword>
<keyword id="KW-0863">Zinc-finger</keyword>
<proteinExistence type="inferred from homology"/>
<organism>
    <name type="scientific">Clostridium botulinum (strain ATCC 19397 / Type A)</name>
    <dbReference type="NCBI Taxonomy" id="441770"/>
    <lineage>
        <taxon>Bacteria</taxon>
        <taxon>Bacillati</taxon>
        <taxon>Bacillota</taxon>
        <taxon>Clostridia</taxon>
        <taxon>Eubacteriales</taxon>
        <taxon>Clostridiaceae</taxon>
        <taxon>Clostridium</taxon>
    </lineage>
</organism>
<comment type="function">
    <text evidence="1">Negatively regulates transcription of bacterial ribonucleotide reductase nrd genes and operons by binding to NrdR-boxes.</text>
</comment>
<comment type="cofactor">
    <cofactor evidence="1">
        <name>Zn(2+)</name>
        <dbReference type="ChEBI" id="CHEBI:29105"/>
    </cofactor>
    <text evidence="1">Binds 1 zinc ion.</text>
</comment>
<comment type="similarity">
    <text evidence="1">Belongs to the NrdR family.</text>
</comment>
<protein>
    <recommendedName>
        <fullName evidence="1">Transcriptional repressor NrdR</fullName>
    </recommendedName>
</protein>
<name>NRDR_CLOB1</name>
<feature type="chain" id="PRO_1000124481" description="Transcriptional repressor NrdR">
    <location>
        <begin position="1"/>
        <end position="151"/>
    </location>
</feature>
<feature type="domain" description="ATP-cone" evidence="1">
    <location>
        <begin position="49"/>
        <end position="139"/>
    </location>
</feature>
<feature type="zinc finger region" evidence="1">
    <location>
        <begin position="3"/>
        <end position="34"/>
    </location>
</feature>
<dbReference type="EMBL" id="CP000726">
    <property type="protein sequence ID" value="ABS33002.1"/>
    <property type="molecule type" value="Genomic_DNA"/>
</dbReference>
<dbReference type="RefSeq" id="WP_003399430.1">
    <property type="nucleotide sequence ID" value="NC_009697.1"/>
</dbReference>
<dbReference type="SMR" id="A7FW99"/>
<dbReference type="GeneID" id="5186785"/>
<dbReference type="KEGG" id="cba:CLB_2406"/>
<dbReference type="HOGENOM" id="CLU_108412_0_0_9"/>
<dbReference type="GO" id="GO:0005524">
    <property type="term" value="F:ATP binding"/>
    <property type="evidence" value="ECO:0007669"/>
    <property type="project" value="UniProtKB-KW"/>
</dbReference>
<dbReference type="GO" id="GO:0003677">
    <property type="term" value="F:DNA binding"/>
    <property type="evidence" value="ECO:0007669"/>
    <property type="project" value="UniProtKB-KW"/>
</dbReference>
<dbReference type="GO" id="GO:0008270">
    <property type="term" value="F:zinc ion binding"/>
    <property type="evidence" value="ECO:0007669"/>
    <property type="project" value="UniProtKB-UniRule"/>
</dbReference>
<dbReference type="GO" id="GO:0045892">
    <property type="term" value="P:negative regulation of DNA-templated transcription"/>
    <property type="evidence" value="ECO:0007669"/>
    <property type="project" value="UniProtKB-UniRule"/>
</dbReference>
<dbReference type="HAMAP" id="MF_00440">
    <property type="entry name" value="NrdR"/>
    <property type="match status" value="1"/>
</dbReference>
<dbReference type="InterPro" id="IPR005144">
    <property type="entry name" value="ATP-cone_dom"/>
</dbReference>
<dbReference type="InterPro" id="IPR055173">
    <property type="entry name" value="NrdR-like_N"/>
</dbReference>
<dbReference type="InterPro" id="IPR003796">
    <property type="entry name" value="RNR_NrdR-like"/>
</dbReference>
<dbReference type="NCBIfam" id="TIGR00244">
    <property type="entry name" value="transcriptional regulator NrdR"/>
    <property type="match status" value="1"/>
</dbReference>
<dbReference type="PANTHER" id="PTHR30455">
    <property type="entry name" value="TRANSCRIPTIONAL REPRESSOR NRDR"/>
    <property type="match status" value="1"/>
</dbReference>
<dbReference type="PANTHER" id="PTHR30455:SF2">
    <property type="entry name" value="TRANSCRIPTIONAL REPRESSOR NRDR"/>
    <property type="match status" value="1"/>
</dbReference>
<dbReference type="Pfam" id="PF03477">
    <property type="entry name" value="ATP-cone"/>
    <property type="match status" value="1"/>
</dbReference>
<dbReference type="Pfam" id="PF22811">
    <property type="entry name" value="Zn_ribbon_NrdR"/>
    <property type="match status" value="1"/>
</dbReference>
<dbReference type="PROSITE" id="PS51161">
    <property type="entry name" value="ATP_CONE"/>
    <property type="match status" value="1"/>
</dbReference>